<dbReference type="EMBL" id="AY228468">
    <property type="protein sequence ID" value="ABP35412.1"/>
    <property type="molecule type" value="Genomic_DNA"/>
</dbReference>
<dbReference type="RefSeq" id="YP_001152166.1">
    <property type="nucleotide sequence ID" value="NC_004677.2"/>
</dbReference>
<dbReference type="SMR" id="A4QM74"/>
<dbReference type="GeneID" id="5048475"/>
<dbReference type="GO" id="GO:0009535">
    <property type="term" value="C:chloroplast thylakoid membrane"/>
    <property type="evidence" value="ECO:0007669"/>
    <property type="project" value="UniProtKB-SubCell"/>
</dbReference>
<dbReference type="GO" id="GO:0015979">
    <property type="term" value="P:photosynthesis"/>
    <property type="evidence" value="ECO:0007669"/>
    <property type="project" value="UniProtKB-UniRule"/>
</dbReference>
<dbReference type="FunFam" id="1.25.40.10:FF:000004">
    <property type="entry name" value="Photosystem I assembly protein Ycf3"/>
    <property type="match status" value="1"/>
</dbReference>
<dbReference type="Gene3D" id="1.25.40.10">
    <property type="entry name" value="Tetratricopeptide repeat domain"/>
    <property type="match status" value="1"/>
</dbReference>
<dbReference type="HAMAP" id="MF_00439">
    <property type="entry name" value="Ycf3"/>
    <property type="match status" value="1"/>
</dbReference>
<dbReference type="InterPro" id="IPR022818">
    <property type="entry name" value="PSI_Ycf3_assembly"/>
</dbReference>
<dbReference type="InterPro" id="IPR011990">
    <property type="entry name" value="TPR-like_helical_dom_sf"/>
</dbReference>
<dbReference type="InterPro" id="IPR019734">
    <property type="entry name" value="TPR_rpt"/>
</dbReference>
<dbReference type="InterPro" id="IPR051685">
    <property type="entry name" value="Ycf3/AcsC/BcsC/TPR_MFPF"/>
</dbReference>
<dbReference type="NCBIfam" id="NF002725">
    <property type="entry name" value="PRK02603.1"/>
    <property type="match status" value="1"/>
</dbReference>
<dbReference type="PANTHER" id="PTHR44943">
    <property type="entry name" value="CELLULOSE SYNTHASE OPERON PROTEIN C"/>
    <property type="match status" value="1"/>
</dbReference>
<dbReference type="PANTHER" id="PTHR44943:SF8">
    <property type="entry name" value="TPR REPEAT-CONTAINING PROTEIN MJ0263"/>
    <property type="match status" value="1"/>
</dbReference>
<dbReference type="Pfam" id="PF00515">
    <property type="entry name" value="TPR_1"/>
    <property type="match status" value="1"/>
</dbReference>
<dbReference type="SMART" id="SM00028">
    <property type="entry name" value="TPR"/>
    <property type="match status" value="3"/>
</dbReference>
<dbReference type="SUPFAM" id="SSF48452">
    <property type="entry name" value="TPR-like"/>
    <property type="match status" value="1"/>
</dbReference>
<dbReference type="PROSITE" id="PS50005">
    <property type="entry name" value="TPR"/>
    <property type="match status" value="3"/>
</dbReference>
<dbReference type="PROSITE" id="PS50293">
    <property type="entry name" value="TPR_REGION"/>
    <property type="match status" value="1"/>
</dbReference>
<reference key="1">
    <citation type="submission" date="2003-02" db="EMBL/GenBank/DDBJ databases">
        <title>Complete nucleotide sequence of Pinus koraiensis.</title>
        <authorList>
            <person name="Noh E.W."/>
            <person name="Lee J.S."/>
            <person name="Choi Y.I."/>
            <person name="Han M.S."/>
            <person name="Yi Y.S."/>
            <person name="Han S.U."/>
        </authorList>
    </citation>
    <scope>NUCLEOTIDE SEQUENCE [LARGE SCALE GENOMIC DNA]</scope>
    <source>
        <strain>KangWon16</strain>
    </source>
</reference>
<keyword id="KW-0150">Chloroplast</keyword>
<keyword id="KW-0472">Membrane</keyword>
<keyword id="KW-0602">Photosynthesis</keyword>
<keyword id="KW-0934">Plastid</keyword>
<keyword id="KW-0677">Repeat</keyword>
<keyword id="KW-0793">Thylakoid</keyword>
<keyword id="KW-0802">TPR repeat</keyword>
<protein>
    <recommendedName>
        <fullName evidence="1">Photosystem I assembly protein Ycf3</fullName>
    </recommendedName>
</protein>
<evidence type="ECO:0000255" key="1">
    <source>
        <dbReference type="HAMAP-Rule" id="MF_00439"/>
    </source>
</evidence>
<feature type="chain" id="PRO_0000325072" description="Photosystem I assembly protein Ycf3">
    <location>
        <begin position="1"/>
        <end position="169"/>
    </location>
</feature>
<feature type="repeat" description="TPR 1">
    <location>
        <begin position="35"/>
        <end position="68"/>
    </location>
</feature>
<feature type="repeat" description="TPR 2">
    <location>
        <begin position="72"/>
        <end position="105"/>
    </location>
</feature>
<feature type="repeat" description="TPR 3">
    <location>
        <begin position="120"/>
        <end position="153"/>
    </location>
</feature>
<gene>
    <name evidence="1" type="primary">ycf3</name>
</gene>
<geneLocation type="chloroplast"/>
<accession>A4QM74</accession>
<name>YCF3_PINKO</name>
<comment type="function">
    <text evidence="1">Essential for the assembly of the photosystem I (PSI) complex. May act as a chaperone-like factor to guide the assembly of the PSI subunits.</text>
</comment>
<comment type="subcellular location">
    <subcellularLocation>
        <location evidence="1">Plastid</location>
        <location evidence="1">Chloroplast thylakoid membrane</location>
        <topology evidence="1">Peripheral membrane protein</topology>
    </subcellularLocation>
</comment>
<comment type="similarity">
    <text evidence="1">Belongs to the Ycf3 family.</text>
</comment>
<organism>
    <name type="scientific">Pinus koraiensis</name>
    <name type="common">Korean pine</name>
    <dbReference type="NCBI Taxonomy" id="88728"/>
    <lineage>
        <taxon>Eukaryota</taxon>
        <taxon>Viridiplantae</taxon>
        <taxon>Streptophyta</taxon>
        <taxon>Embryophyta</taxon>
        <taxon>Tracheophyta</taxon>
        <taxon>Spermatophyta</taxon>
        <taxon>Pinopsida</taxon>
        <taxon>Pinidae</taxon>
        <taxon>Conifers I</taxon>
        <taxon>Pinales</taxon>
        <taxon>Pinaceae</taxon>
        <taxon>Pinus</taxon>
        <taxon>Pinus subgen. Strobus</taxon>
    </lineage>
</organism>
<sequence>MPRSQRNDNFIDKTFTIIADILLRIIPMAPGEKEAFTYYRDGMSAQSEGEYAEALQNYYEAMRLETDPYDRSYILYNIGLVHTSNGEHTKALEYYFQALERNPSLPQALNNTALICHYRGEQAIRQGDPETAEAWFDQAAEYWEQAIALAPGNYIEAQNWLKITGRFGE</sequence>
<proteinExistence type="inferred from homology"/>